<feature type="chain" id="PRO_1000115002" description="Small ribosomal subunit protein uS2">
    <location>
        <begin position="1"/>
        <end position="246"/>
    </location>
</feature>
<feature type="region of interest" description="Disordered" evidence="2">
    <location>
        <begin position="225"/>
        <end position="246"/>
    </location>
</feature>
<reference key="1">
    <citation type="journal article" date="2008" name="J. Bacteriol.">
        <title>Insights into plant cell wall degradation from the genome sequence of the soil bacterium Cellvibrio japonicus.</title>
        <authorList>
            <person name="DeBoy R.T."/>
            <person name="Mongodin E.F."/>
            <person name="Fouts D.E."/>
            <person name="Tailford L.E."/>
            <person name="Khouri H."/>
            <person name="Emerson J.B."/>
            <person name="Mohamoud Y."/>
            <person name="Watkins K."/>
            <person name="Henrissat B."/>
            <person name="Gilbert H.J."/>
            <person name="Nelson K.E."/>
        </authorList>
    </citation>
    <scope>NUCLEOTIDE SEQUENCE [LARGE SCALE GENOMIC DNA]</scope>
    <source>
        <strain>Ueda107</strain>
    </source>
</reference>
<evidence type="ECO:0000255" key="1">
    <source>
        <dbReference type="HAMAP-Rule" id="MF_00291"/>
    </source>
</evidence>
<evidence type="ECO:0000256" key="2">
    <source>
        <dbReference type="SAM" id="MobiDB-lite"/>
    </source>
</evidence>
<evidence type="ECO:0000305" key="3"/>
<gene>
    <name evidence="1" type="primary">rpsB</name>
    <name type="ordered locus">CJA_1110</name>
</gene>
<accession>B3PBP6</accession>
<keyword id="KW-1185">Reference proteome</keyword>
<keyword id="KW-0687">Ribonucleoprotein</keyword>
<keyword id="KW-0689">Ribosomal protein</keyword>
<comment type="similarity">
    <text evidence="1">Belongs to the universal ribosomal protein uS2 family.</text>
</comment>
<protein>
    <recommendedName>
        <fullName evidence="1">Small ribosomal subunit protein uS2</fullName>
    </recommendedName>
    <alternativeName>
        <fullName evidence="3">30S ribosomal protein S2</fullName>
    </alternativeName>
</protein>
<sequence length="246" mass="27058">MPQVSMRDMLSAGVHFGHQTRYWNPKMGKYIFGARNKIHIINLEHTVPAFNEALNLITQMAAQKKKILFVGTKRAAQKTIKEQAERAGQPFVSHRWLGGMLTNYKTIRASIRRLSDLTTQSQDGTFAKLTKKEALMRSRDMEKLERSIGGIKGMGGLPDAMFVIDVEHERIAIQEANKLGIPVIGVVDTNSSPEGIDYVIPGNDDAIRAIKLYATAIADACLEGSKSSASVPNKDEYVAAEDGAAE</sequence>
<organism>
    <name type="scientific">Cellvibrio japonicus (strain Ueda107)</name>
    <name type="common">Pseudomonas fluorescens subsp. cellulosa</name>
    <dbReference type="NCBI Taxonomy" id="498211"/>
    <lineage>
        <taxon>Bacteria</taxon>
        <taxon>Pseudomonadati</taxon>
        <taxon>Pseudomonadota</taxon>
        <taxon>Gammaproteobacteria</taxon>
        <taxon>Cellvibrionales</taxon>
        <taxon>Cellvibrionaceae</taxon>
        <taxon>Cellvibrio</taxon>
    </lineage>
</organism>
<proteinExistence type="inferred from homology"/>
<dbReference type="EMBL" id="CP000934">
    <property type="protein sequence ID" value="ACE85343.1"/>
    <property type="molecule type" value="Genomic_DNA"/>
</dbReference>
<dbReference type="RefSeq" id="WP_012486758.1">
    <property type="nucleotide sequence ID" value="NC_010995.1"/>
</dbReference>
<dbReference type="SMR" id="B3PBP6"/>
<dbReference type="STRING" id="498211.CJA_1110"/>
<dbReference type="KEGG" id="cja:CJA_1110"/>
<dbReference type="eggNOG" id="COG0052">
    <property type="taxonomic scope" value="Bacteria"/>
</dbReference>
<dbReference type="HOGENOM" id="CLU_040318_1_2_6"/>
<dbReference type="OrthoDB" id="9808036at2"/>
<dbReference type="Proteomes" id="UP000001036">
    <property type="component" value="Chromosome"/>
</dbReference>
<dbReference type="GO" id="GO:0022627">
    <property type="term" value="C:cytosolic small ribosomal subunit"/>
    <property type="evidence" value="ECO:0007669"/>
    <property type="project" value="TreeGrafter"/>
</dbReference>
<dbReference type="GO" id="GO:0003735">
    <property type="term" value="F:structural constituent of ribosome"/>
    <property type="evidence" value="ECO:0007669"/>
    <property type="project" value="InterPro"/>
</dbReference>
<dbReference type="GO" id="GO:0006412">
    <property type="term" value="P:translation"/>
    <property type="evidence" value="ECO:0007669"/>
    <property type="project" value="UniProtKB-UniRule"/>
</dbReference>
<dbReference type="CDD" id="cd01425">
    <property type="entry name" value="RPS2"/>
    <property type="match status" value="1"/>
</dbReference>
<dbReference type="FunFam" id="1.10.287.610:FF:000001">
    <property type="entry name" value="30S ribosomal protein S2"/>
    <property type="match status" value="1"/>
</dbReference>
<dbReference type="Gene3D" id="3.40.50.10490">
    <property type="entry name" value="Glucose-6-phosphate isomerase like protein, domain 1"/>
    <property type="match status" value="1"/>
</dbReference>
<dbReference type="Gene3D" id="1.10.287.610">
    <property type="entry name" value="Helix hairpin bin"/>
    <property type="match status" value="1"/>
</dbReference>
<dbReference type="HAMAP" id="MF_00291_B">
    <property type="entry name" value="Ribosomal_uS2_B"/>
    <property type="match status" value="1"/>
</dbReference>
<dbReference type="InterPro" id="IPR001865">
    <property type="entry name" value="Ribosomal_uS2"/>
</dbReference>
<dbReference type="InterPro" id="IPR005706">
    <property type="entry name" value="Ribosomal_uS2_bac/mit/plastid"/>
</dbReference>
<dbReference type="InterPro" id="IPR018130">
    <property type="entry name" value="Ribosomal_uS2_CS"/>
</dbReference>
<dbReference type="InterPro" id="IPR023591">
    <property type="entry name" value="Ribosomal_uS2_flav_dom_sf"/>
</dbReference>
<dbReference type="NCBIfam" id="TIGR01011">
    <property type="entry name" value="rpsB_bact"/>
    <property type="match status" value="1"/>
</dbReference>
<dbReference type="PANTHER" id="PTHR12534">
    <property type="entry name" value="30S RIBOSOMAL PROTEIN S2 PROKARYOTIC AND ORGANELLAR"/>
    <property type="match status" value="1"/>
</dbReference>
<dbReference type="PANTHER" id="PTHR12534:SF0">
    <property type="entry name" value="SMALL RIBOSOMAL SUBUNIT PROTEIN US2M"/>
    <property type="match status" value="1"/>
</dbReference>
<dbReference type="Pfam" id="PF00318">
    <property type="entry name" value="Ribosomal_S2"/>
    <property type="match status" value="1"/>
</dbReference>
<dbReference type="PRINTS" id="PR00395">
    <property type="entry name" value="RIBOSOMALS2"/>
</dbReference>
<dbReference type="SUPFAM" id="SSF52313">
    <property type="entry name" value="Ribosomal protein S2"/>
    <property type="match status" value="1"/>
</dbReference>
<dbReference type="PROSITE" id="PS00962">
    <property type="entry name" value="RIBOSOMAL_S2_1"/>
    <property type="match status" value="1"/>
</dbReference>
<dbReference type="PROSITE" id="PS00963">
    <property type="entry name" value="RIBOSOMAL_S2_2"/>
    <property type="match status" value="1"/>
</dbReference>
<name>RS2_CELJU</name>